<organism>
    <name type="scientific">Leishmania infantum</name>
    <dbReference type="NCBI Taxonomy" id="5671"/>
    <lineage>
        <taxon>Eukaryota</taxon>
        <taxon>Discoba</taxon>
        <taxon>Euglenozoa</taxon>
        <taxon>Kinetoplastea</taxon>
        <taxon>Metakinetoplastina</taxon>
        <taxon>Trypanosomatida</taxon>
        <taxon>Trypanosomatidae</taxon>
        <taxon>Leishmaniinae</taxon>
        <taxon>Leishmania</taxon>
    </lineage>
</organism>
<sequence>MKLCGVRSSGVSLTRSSDFPRFRAAHHGGAHTATRHQSLCGRRLDSYMGAGKRWCFRPLLAEPRRYSNASSAFTTDGATAPAHGEGLYVSHYAMPEDARRLVGTPQLLPRNPAEEVAFKKNLIRSFPQACIRNVSVVAHVDHGKTTLSDAMLRFSNLLPADGATGTFTDRLKVEKERGITIKAQTCSVLLTLRETGTQYLVNLIDTPGHVDFQYEVSRSLCASEGAALLVDVRQGVEAQTMAQFYAALEQNLTILPVLTKMDSVMSDAEVEKTLLQLEDSTGLLSREVILTSAKSKRGIEQLFQHIIDKVPPPCGREGFSDMKQLPAMHPGSADRKKVEKELVPLRALLFDCWTSESSGMADGAASAPVSTASSVSSGTAPASGGQSVAKDGIYGLIRVMDGTVTPGTTVTFFHSGKKHEVREVGIIHPTLHPTAALTAGMVGFVFFPGLLKKDVFIGDTLCTLPTRKHTMRVVATGSPATASRTKPATAAETASSDDASGSGSSSVVEPIPGFKTVQPVVFAGFYPDEGVYITQLREAVDLLCVNDPSVTVEQLQCPALGPGLQLGFLGFLHMQVFKERLLMEFGQAVLVTPPQVQYMYVEQHGDPDDPAQRKPVSVSNWRWPHEGVGAYLEPFVTATVLTPSEYLNEINSAALSAFRGEMQEMRVIDGARTLVRYRMPLADLARGFFSTVKSSSHGYATLEYDDLTYMTADLVKMDIVINKAHISALSTICLRHEANTHARRIIGSLKEKLLRSSVDLPLQALVGSKIIARETVKAYRKDVTAKIHAGDISRKQKKWNDQKKGKERMARRSVGTVTLDQSVLAAALGATTAR</sequence>
<comment type="function">
    <text evidence="1">Promotes mitochondrial protein synthesis. May act as a fidelity factor of the translation reaction, by catalyzing a one-codon backward translocation of tRNAs on improperly translocated ribosomes. Binds to mitochondrial ribosomes in a GTP-dependent manner.</text>
</comment>
<comment type="catalytic activity">
    <reaction evidence="1">
        <text>GTP + H2O = GDP + phosphate + H(+)</text>
        <dbReference type="Rhea" id="RHEA:19669"/>
        <dbReference type="ChEBI" id="CHEBI:15377"/>
        <dbReference type="ChEBI" id="CHEBI:15378"/>
        <dbReference type="ChEBI" id="CHEBI:37565"/>
        <dbReference type="ChEBI" id="CHEBI:43474"/>
        <dbReference type="ChEBI" id="CHEBI:58189"/>
    </reaction>
</comment>
<comment type="subcellular location">
    <subcellularLocation>
        <location evidence="1">Mitochondrion inner membrane</location>
        <topology evidence="1">Peripheral membrane protein</topology>
        <orientation evidence="1">Matrix side</orientation>
    </subcellularLocation>
</comment>
<comment type="similarity">
    <text evidence="3">Belongs to the TRAFAC class translation factor GTPase superfamily. Classic translation factor GTPase family. LepA subfamily.</text>
</comment>
<keyword id="KW-0342">GTP-binding</keyword>
<keyword id="KW-0378">Hydrolase</keyword>
<keyword id="KW-0472">Membrane</keyword>
<keyword id="KW-0496">Mitochondrion</keyword>
<keyword id="KW-0999">Mitochondrion inner membrane</keyword>
<keyword id="KW-0547">Nucleotide-binding</keyword>
<keyword id="KW-0648">Protein biosynthesis</keyword>
<keyword id="KW-1185">Reference proteome</keyword>
<keyword id="KW-0809">Transit peptide</keyword>
<gene>
    <name type="ORF">LinJ34.0590</name>
    <name type="ORF">LinJ_34_0590</name>
</gene>
<evidence type="ECO:0000255" key="1">
    <source>
        <dbReference type="HAMAP-Rule" id="MF_03137"/>
    </source>
</evidence>
<evidence type="ECO:0000256" key="2">
    <source>
        <dbReference type="SAM" id="MobiDB-lite"/>
    </source>
</evidence>
<evidence type="ECO:0000305" key="3"/>
<name>GUF1_LEIIN</name>
<accession>A4I9M7</accession>
<dbReference type="EC" id="3.6.5.-"/>
<dbReference type="EMBL" id="FR796466">
    <property type="protein sequence ID" value="CAM71530.1"/>
    <property type="molecule type" value="Genomic_DNA"/>
</dbReference>
<dbReference type="RefSeq" id="XP_001468446.1">
    <property type="nucleotide sequence ID" value="XM_001468409.1"/>
</dbReference>
<dbReference type="SMR" id="A4I9M7"/>
<dbReference type="FunCoup" id="A4I9M7">
    <property type="interactions" value="193"/>
</dbReference>
<dbReference type="STRING" id="5671.A4I9M7"/>
<dbReference type="GeneID" id="5072522"/>
<dbReference type="KEGG" id="lif:LINJ_34_0590"/>
<dbReference type="VEuPathDB" id="TriTrypDB:LINF_340011300"/>
<dbReference type="eggNOG" id="KOG0462">
    <property type="taxonomic scope" value="Eukaryota"/>
</dbReference>
<dbReference type="InParanoid" id="A4I9M7"/>
<dbReference type="OMA" id="QVKCDEN"/>
<dbReference type="Proteomes" id="UP000008153">
    <property type="component" value="Chromosome 34"/>
</dbReference>
<dbReference type="GO" id="GO:0005743">
    <property type="term" value="C:mitochondrial inner membrane"/>
    <property type="evidence" value="ECO:0007669"/>
    <property type="project" value="UniProtKB-SubCell"/>
</dbReference>
<dbReference type="GO" id="GO:0005759">
    <property type="term" value="C:mitochondrial matrix"/>
    <property type="evidence" value="ECO:0007669"/>
    <property type="project" value="UniProtKB-UniRule"/>
</dbReference>
<dbReference type="GO" id="GO:0005525">
    <property type="term" value="F:GTP binding"/>
    <property type="evidence" value="ECO:0007669"/>
    <property type="project" value="UniProtKB-UniRule"/>
</dbReference>
<dbReference type="GO" id="GO:0003924">
    <property type="term" value="F:GTPase activity"/>
    <property type="evidence" value="ECO:0007669"/>
    <property type="project" value="UniProtKB-UniRule"/>
</dbReference>
<dbReference type="GO" id="GO:0097177">
    <property type="term" value="F:mitochondrial ribosome binding"/>
    <property type="evidence" value="ECO:0007669"/>
    <property type="project" value="TreeGrafter"/>
</dbReference>
<dbReference type="GO" id="GO:0045727">
    <property type="term" value="P:positive regulation of translation"/>
    <property type="evidence" value="ECO:0007669"/>
    <property type="project" value="UniProtKB-UniRule"/>
</dbReference>
<dbReference type="GO" id="GO:0006412">
    <property type="term" value="P:translation"/>
    <property type="evidence" value="ECO:0007669"/>
    <property type="project" value="UniProtKB-KW"/>
</dbReference>
<dbReference type="CDD" id="cd03709">
    <property type="entry name" value="lepA_C"/>
    <property type="match status" value="1"/>
</dbReference>
<dbReference type="FunFam" id="2.40.30.10:FF:000187">
    <property type="entry name" value="Translation factor GUF1 homolog, mitochondrial"/>
    <property type="match status" value="1"/>
</dbReference>
<dbReference type="FunFam" id="3.40.50.300:FF:002566">
    <property type="entry name" value="Translation factor GUF1 homolog, mitochondrial"/>
    <property type="match status" value="1"/>
</dbReference>
<dbReference type="FunFam" id="3.30.70.240:FF:000007">
    <property type="entry name" value="Translation factor GUF1, mitochondrial"/>
    <property type="match status" value="1"/>
</dbReference>
<dbReference type="FunFam" id="3.30.70.2570:FF:000001">
    <property type="entry name" value="Translation factor GUF1, mitochondrial"/>
    <property type="match status" value="1"/>
</dbReference>
<dbReference type="Gene3D" id="3.30.70.240">
    <property type="match status" value="1"/>
</dbReference>
<dbReference type="Gene3D" id="3.30.70.2570">
    <property type="entry name" value="Elongation factor 4, C-terminal domain"/>
    <property type="match status" value="1"/>
</dbReference>
<dbReference type="Gene3D" id="3.30.70.870">
    <property type="entry name" value="Elongation Factor G (Translational Gtpase), domain 3"/>
    <property type="match status" value="1"/>
</dbReference>
<dbReference type="Gene3D" id="3.40.50.300">
    <property type="entry name" value="P-loop containing nucleotide triphosphate hydrolases"/>
    <property type="match status" value="1"/>
</dbReference>
<dbReference type="Gene3D" id="2.40.30.10">
    <property type="entry name" value="Translation factors"/>
    <property type="match status" value="1"/>
</dbReference>
<dbReference type="HAMAP" id="MF_00071">
    <property type="entry name" value="LepA"/>
    <property type="match status" value="1"/>
</dbReference>
<dbReference type="InterPro" id="IPR006297">
    <property type="entry name" value="EF-4"/>
</dbReference>
<dbReference type="InterPro" id="IPR035647">
    <property type="entry name" value="EFG_III/V"/>
</dbReference>
<dbReference type="InterPro" id="IPR000640">
    <property type="entry name" value="EFG_V-like"/>
</dbReference>
<dbReference type="InterPro" id="IPR038363">
    <property type="entry name" value="LepA_C_sf"/>
</dbReference>
<dbReference type="InterPro" id="IPR013842">
    <property type="entry name" value="LepA_CTD"/>
</dbReference>
<dbReference type="InterPro" id="IPR035654">
    <property type="entry name" value="LepA_IV"/>
</dbReference>
<dbReference type="InterPro" id="IPR027417">
    <property type="entry name" value="P-loop_NTPase"/>
</dbReference>
<dbReference type="InterPro" id="IPR005225">
    <property type="entry name" value="Small_GTP-bd"/>
</dbReference>
<dbReference type="InterPro" id="IPR000795">
    <property type="entry name" value="T_Tr_GTP-bd_dom"/>
</dbReference>
<dbReference type="InterPro" id="IPR009000">
    <property type="entry name" value="Transl_B-barrel_sf"/>
</dbReference>
<dbReference type="NCBIfam" id="TIGR00231">
    <property type="entry name" value="small_GTP"/>
    <property type="match status" value="1"/>
</dbReference>
<dbReference type="PANTHER" id="PTHR43512:SF7">
    <property type="entry name" value="TRANSLATION FACTOR GUF1, MITOCHONDRIAL"/>
    <property type="match status" value="1"/>
</dbReference>
<dbReference type="PANTHER" id="PTHR43512">
    <property type="entry name" value="TRANSLATION FACTOR GUF1-RELATED"/>
    <property type="match status" value="1"/>
</dbReference>
<dbReference type="Pfam" id="PF00679">
    <property type="entry name" value="EFG_C"/>
    <property type="match status" value="1"/>
</dbReference>
<dbReference type="Pfam" id="PF00009">
    <property type="entry name" value="GTP_EFTU"/>
    <property type="match status" value="1"/>
</dbReference>
<dbReference type="Pfam" id="PF06421">
    <property type="entry name" value="LepA_C"/>
    <property type="match status" value="1"/>
</dbReference>
<dbReference type="PRINTS" id="PR00315">
    <property type="entry name" value="ELONGATNFCT"/>
</dbReference>
<dbReference type="SUPFAM" id="SSF54980">
    <property type="entry name" value="EF-G C-terminal domain-like"/>
    <property type="match status" value="2"/>
</dbReference>
<dbReference type="SUPFAM" id="SSF52540">
    <property type="entry name" value="P-loop containing nucleoside triphosphate hydrolases"/>
    <property type="match status" value="1"/>
</dbReference>
<dbReference type="SUPFAM" id="SSF50447">
    <property type="entry name" value="Translation proteins"/>
    <property type="match status" value="1"/>
</dbReference>
<dbReference type="PROSITE" id="PS00301">
    <property type="entry name" value="G_TR_1"/>
    <property type="match status" value="1"/>
</dbReference>
<dbReference type="PROSITE" id="PS51722">
    <property type="entry name" value="G_TR_2"/>
    <property type="match status" value="1"/>
</dbReference>
<feature type="transit peptide" description="Mitochondrion" evidence="1">
    <location>
        <begin position="1"/>
        <end position="66"/>
    </location>
</feature>
<feature type="chain" id="PRO_0000402858" description="Translation factor GUF1 homolog, mitochondrial">
    <location>
        <begin position="67"/>
        <end position="834"/>
    </location>
</feature>
<feature type="domain" description="tr-type G">
    <location>
        <begin position="129"/>
        <end position="314"/>
    </location>
</feature>
<feature type="region of interest" description="Disordered" evidence="2">
    <location>
        <begin position="363"/>
        <end position="385"/>
    </location>
</feature>
<feature type="region of interest" description="Disordered" evidence="2">
    <location>
        <begin position="476"/>
        <end position="507"/>
    </location>
</feature>
<feature type="compositionally biased region" description="Low complexity" evidence="2">
    <location>
        <begin position="488"/>
        <end position="507"/>
    </location>
</feature>
<feature type="binding site" evidence="1">
    <location>
        <begin position="138"/>
        <end position="145"/>
    </location>
    <ligand>
        <name>GTP</name>
        <dbReference type="ChEBI" id="CHEBI:37565"/>
    </ligand>
</feature>
<feature type="binding site" evidence="1">
    <location>
        <begin position="205"/>
        <end position="209"/>
    </location>
    <ligand>
        <name>GTP</name>
        <dbReference type="ChEBI" id="CHEBI:37565"/>
    </ligand>
</feature>
<feature type="binding site" evidence="1">
    <location>
        <begin position="259"/>
        <end position="262"/>
    </location>
    <ligand>
        <name>GTP</name>
        <dbReference type="ChEBI" id="CHEBI:37565"/>
    </ligand>
</feature>
<protein>
    <recommendedName>
        <fullName evidence="1">Translation factor GUF1 homolog, mitochondrial</fullName>
        <ecNumber>3.6.5.-</ecNumber>
    </recommendedName>
    <alternativeName>
        <fullName evidence="1">Elongation factor 4 homolog</fullName>
        <shortName evidence="1">EF-4</shortName>
    </alternativeName>
    <alternativeName>
        <fullName evidence="1">GTPase GUF1 homolog</fullName>
    </alternativeName>
    <alternativeName>
        <fullName evidence="1">Ribosomal back-translocase</fullName>
    </alternativeName>
</protein>
<reference key="1">
    <citation type="journal article" date="2007" name="Nat. Genet.">
        <title>Comparative genomic analysis of three Leishmania species that cause diverse human disease.</title>
        <authorList>
            <person name="Peacock C.S."/>
            <person name="Seeger K."/>
            <person name="Harris D."/>
            <person name="Murphy L."/>
            <person name="Ruiz J.C."/>
            <person name="Quail M.A."/>
            <person name="Peters N."/>
            <person name="Adlem E."/>
            <person name="Tivey A."/>
            <person name="Aslett M."/>
            <person name="Kerhornou A."/>
            <person name="Ivens A."/>
            <person name="Fraser A."/>
            <person name="Rajandream M.-A."/>
            <person name="Carver T."/>
            <person name="Norbertczak H."/>
            <person name="Chillingworth T."/>
            <person name="Hance Z."/>
            <person name="Jagels K."/>
            <person name="Moule S."/>
            <person name="Ormond D."/>
            <person name="Rutter S."/>
            <person name="Sqaures R."/>
            <person name="Whitehead S."/>
            <person name="Rabbinowitsch E."/>
            <person name="Arrowsmith C."/>
            <person name="White B."/>
            <person name="Thurston S."/>
            <person name="Bringaud F."/>
            <person name="Baldauf S.L."/>
            <person name="Faulconbridge A."/>
            <person name="Jeffares D."/>
            <person name="Depledge D.P."/>
            <person name="Oyola S.O."/>
            <person name="Hilley J.D."/>
            <person name="Brito L.O."/>
            <person name="Tosi L.R.O."/>
            <person name="Barrell B."/>
            <person name="Cruz A.K."/>
            <person name="Mottram J.C."/>
            <person name="Smith D.F."/>
            <person name="Berriman M."/>
        </authorList>
    </citation>
    <scope>NUCLEOTIDE SEQUENCE [LARGE SCALE GENOMIC DNA]</scope>
    <source>
        <strain>JPCM5</strain>
    </source>
</reference>
<proteinExistence type="inferred from homology"/>